<protein>
    <recommendedName>
        <fullName>MAP kinase-activated protein kinase 2</fullName>
        <shortName>MAPK-activated protein kinase 2</shortName>
        <shortName>MAPKAP kinase 2</shortName>
        <shortName>MAPKAPK-2</shortName>
        <ecNumber>2.7.11.1</ecNumber>
    </recommendedName>
</protein>
<sequence>MLSLQNQRQPKTTPLTDDYVTSNTVLGYGINGKVVQCTHRRTQQNYALKVLLDSERARREVDLHWRVSGCRYIVNIIDVYENTFKDRKCLLVVMECMEGGELFQRIQDKADGAFTEREAAQIMHEICAAVDYLHSRDIAHRDLKPENLLYTTTQPNATLKLTDFGFAKETFTSYTLQTPCYTPYYVAPEVLGPEKYDKSCDIWSLGVVMYIIMCGFPPFYSNHGLAISPGMKNRIRTGQYDFPDPEWTNVSQAAKDLIKGMLNVDPSKRLRIQDVISNKWIAQYNAVPQTPLCTGRMLKEAEETWPEVQEEMTRSLATMRVDYDQMQIKALDKSNNPLLTKRRKKIEEMELYMANATRN</sequence>
<reference key="1">
    <citation type="journal article" date="1995" name="Gene">
        <title>The Drosophila melanogaster homolog of the mammalian MAPK-activated protein kinase-2 (MAPKAPK-2) lacks a proline-rich N-terminus.</title>
        <authorList>
            <person name="Larochelle S."/>
            <person name="Suter B."/>
        </authorList>
    </citation>
    <scope>NUCLEOTIDE SEQUENCE [MRNA]</scope>
    <source>
        <strain>BIC-D(R26)</strain>
        <tissue>Ovary</tissue>
    </source>
</reference>
<reference key="2">
    <citation type="journal article" date="2000" name="Science">
        <title>The genome sequence of Drosophila melanogaster.</title>
        <authorList>
            <person name="Adams M.D."/>
            <person name="Celniker S.E."/>
            <person name="Holt R.A."/>
            <person name="Evans C.A."/>
            <person name="Gocayne J.D."/>
            <person name="Amanatides P.G."/>
            <person name="Scherer S.E."/>
            <person name="Li P.W."/>
            <person name="Hoskins R.A."/>
            <person name="Galle R.F."/>
            <person name="George R.A."/>
            <person name="Lewis S.E."/>
            <person name="Richards S."/>
            <person name="Ashburner M."/>
            <person name="Henderson S.N."/>
            <person name="Sutton G.G."/>
            <person name="Wortman J.R."/>
            <person name="Yandell M.D."/>
            <person name="Zhang Q."/>
            <person name="Chen L.X."/>
            <person name="Brandon R.C."/>
            <person name="Rogers Y.-H.C."/>
            <person name="Blazej R.G."/>
            <person name="Champe M."/>
            <person name="Pfeiffer B.D."/>
            <person name="Wan K.H."/>
            <person name="Doyle C."/>
            <person name="Baxter E.G."/>
            <person name="Helt G."/>
            <person name="Nelson C.R."/>
            <person name="Miklos G.L.G."/>
            <person name="Abril J.F."/>
            <person name="Agbayani A."/>
            <person name="An H.-J."/>
            <person name="Andrews-Pfannkoch C."/>
            <person name="Baldwin D."/>
            <person name="Ballew R.M."/>
            <person name="Basu A."/>
            <person name="Baxendale J."/>
            <person name="Bayraktaroglu L."/>
            <person name="Beasley E.M."/>
            <person name="Beeson K.Y."/>
            <person name="Benos P.V."/>
            <person name="Berman B.P."/>
            <person name="Bhandari D."/>
            <person name="Bolshakov S."/>
            <person name="Borkova D."/>
            <person name="Botchan M.R."/>
            <person name="Bouck J."/>
            <person name="Brokstein P."/>
            <person name="Brottier P."/>
            <person name="Burtis K.C."/>
            <person name="Busam D.A."/>
            <person name="Butler H."/>
            <person name="Cadieu E."/>
            <person name="Center A."/>
            <person name="Chandra I."/>
            <person name="Cherry J.M."/>
            <person name="Cawley S."/>
            <person name="Dahlke C."/>
            <person name="Davenport L.B."/>
            <person name="Davies P."/>
            <person name="de Pablos B."/>
            <person name="Delcher A."/>
            <person name="Deng Z."/>
            <person name="Mays A.D."/>
            <person name="Dew I."/>
            <person name="Dietz S.M."/>
            <person name="Dodson K."/>
            <person name="Doup L.E."/>
            <person name="Downes M."/>
            <person name="Dugan-Rocha S."/>
            <person name="Dunkov B.C."/>
            <person name="Dunn P."/>
            <person name="Durbin K.J."/>
            <person name="Evangelista C.C."/>
            <person name="Ferraz C."/>
            <person name="Ferriera S."/>
            <person name="Fleischmann W."/>
            <person name="Fosler C."/>
            <person name="Gabrielian A.E."/>
            <person name="Garg N.S."/>
            <person name="Gelbart W.M."/>
            <person name="Glasser K."/>
            <person name="Glodek A."/>
            <person name="Gong F."/>
            <person name="Gorrell J.H."/>
            <person name="Gu Z."/>
            <person name="Guan P."/>
            <person name="Harris M."/>
            <person name="Harris N.L."/>
            <person name="Harvey D.A."/>
            <person name="Heiman T.J."/>
            <person name="Hernandez J.R."/>
            <person name="Houck J."/>
            <person name="Hostin D."/>
            <person name="Houston K.A."/>
            <person name="Howland T.J."/>
            <person name="Wei M.-H."/>
            <person name="Ibegwam C."/>
            <person name="Jalali M."/>
            <person name="Kalush F."/>
            <person name="Karpen G.H."/>
            <person name="Ke Z."/>
            <person name="Kennison J.A."/>
            <person name="Ketchum K.A."/>
            <person name="Kimmel B.E."/>
            <person name="Kodira C.D."/>
            <person name="Kraft C.L."/>
            <person name="Kravitz S."/>
            <person name="Kulp D."/>
            <person name="Lai Z."/>
            <person name="Lasko P."/>
            <person name="Lei Y."/>
            <person name="Levitsky A.A."/>
            <person name="Li J.H."/>
            <person name="Li Z."/>
            <person name="Liang Y."/>
            <person name="Lin X."/>
            <person name="Liu X."/>
            <person name="Mattei B."/>
            <person name="McIntosh T.C."/>
            <person name="McLeod M.P."/>
            <person name="McPherson D."/>
            <person name="Merkulov G."/>
            <person name="Milshina N.V."/>
            <person name="Mobarry C."/>
            <person name="Morris J."/>
            <person name="Moshrefi A."/>
            <person name="Mount S.M."/>
            <person name="Moy M."/>
            <person name="Murphy B."/>
            <person name="Murphy L."/>
            <person name="Muzny D.M."/>
            <person name="Nelson D.L."/>
            <person name="Nelson D.R."/>
            <person name="Nelson K.A."/>
            <person name="Nixon K."/>
            <person name="Nusskern D.R."/>
            <person name="Pacleb J.M."/>
            <person name="Palazzolo M."/>
            <person name="Pittman G.S."/>
            <person name="Pan S."/>
            <person name="Pollard J."/>
            <person name="Puri V."/>
            <person name="Reese M.G."/>
            <person name="Reinert K."/>
            <person name="Remington K."/>
            <person name="Saunders R.D.C."/>
            <person name="Scheeler F."/>
            <person name="Shen H."/>
            <person name="Shue B.C."/>
            <person name="Siden-Kiamos I."/>
            <person name="Simpson M."/>
            <person name="Skupski M.P."/>
            <person name="Smith T.J."/>
            <person name="Spier E."/>
            <person name="Spradling A.C."/>
            <person name="Stapleton M."/>
            <person name="Strong R."/>
            <person name="Sun E."/>
            <person name="Svirskas R."/>
            <person name="Tector C."/>
            <person name="Turner R."/>
            <person name="Venter E."/>
            <person name="Wang A.H."/>
            <person name="Wang X."/>
            <person name="Wang Z.-Y."/>
            <person name="Wassarman D.A."/>
            <person name="Weinstock G.M."/>
            <person name="Weissenbach J."/>
            <person name="Williams S.M."/>
            <person name="Woodage T."/>
            <person name="Worley K.C."/>
            <person name="Wu D."/>
            <person name="Yang S."/>
            <person name="Yao Q.A."/>
            <person name="Ye J."/>
            <person name="Yeh R.-F."/>
            <person name="Zaveri J.S."/>
            <person name="Zhan M."/>
            <person name="Zhang G."/>
            <person name="Zhao Q."/>
            <person name="Zheng L."/>
            <person name="Zheng X.H."/>
            <person name="Zhong F.N."/>
            <person name="Zhong W."/>
            <person name="Zhou X."/>
            <person name="Zhu S.C."/>
            <person name="Zhu X."/>
            <person name="Smith H.O."/>
            <person name="Gibbs R.A."/>
            <person name="Myers E.W."/>
            <person name="Rubin G.M."/>
            <person name="Venter J.C."/>
        </authorList>
    </citation>
    <scope>NUCLEOTIDE SEQUENCE [LARGE SCALE GENOMIC DNA]</scope>
    <source>
        <strain>Berkeley</strain>
    </source>
</reference>
<reference key="3">
    <citation type="journal article" date="2002" name="Genome Biol.">
        <title>Annotation of the Drosophila melanogaster euchromatic genome: a systematic review.</title>
        <authorList>
            <person name="Misra S."/>
            <person name="Crosby M.A."/>
            <person name="Mungall C.J."/>
            <person name="Matthews B.B."/>
            <person name="Campbell K.S."/>
            <person name="Hradecky P."/>
            <person name="Huang Y."/>
            <person name="Kaminker J.S."/>
            <person name="Millburn G.H."/>
            <person name="Prochnik S.E."/>
            <person name="Smith C.D."/>
            <person name="Tupy J.L."/>
            <person name="Whitfield E.J."/>
            <person name="Bayraktaroglu L."/>
            <person name="Berman B.P."/>
            <person name="Bettencourt B.R."/>
            <person name="Celniker S.E."/>
            <person name="de Grey A.D.N.J."/>
            <person name="Drysdale R.A."/>
            <person name="Harris N.L."/>
            <person name="Richter J."/>
            <person name="Russo S."/>
            <person name="Schroeder A.J."/>
            <person name="Shu S.Q."/>
            <person name="Stapleton M."/>
            <person name="Yamada C."/>
            <person name="Ashburner M."/>
            <person name="Gelbart W.M."/>
            <person name="Rubin G.M."/>
            <person name="Lewis S.E."/>
        </authorList>
    </citation>
    <scope>GENOME REANNOTATION</scope>
    <source>
        <strain>Berkeley</strain>
    </source>
</reference>
<accession>P49071</accession>
<accession>Q9W480</accession>
<name>MAPK2_DROME</name>
<proteinExistence type="evidence at transcript level"/>
<feature type="chain" id="PRO_0000086291" description="MAP kinase-activated protein kinase 2">
    <location>
        <begin position="1"/>
        <end position="359"/>
    </location>
</feature>
<feature type="domain" description="Protein kinase" evidence="2">
    <location>
        <begin position="20"/>
        <end position="281"/>
    </location>
</feature>
<feature type="active site" description="Proton acceptor" evidence="2 3">
    <location>
        <position position="142"/>
    </location>
</feature>
<feature type="binding site" evidence="2">
    <location>
        <begin position="26"/>
        <end position="34"/>
    </location>
    <ligand>
        <name>ATP</name>
        <dbReference type="ChEBI" id="CHEBI:30616"/>
    </ligand>
</feature>
<feature type="binding site" evidence="2">
    <location>
        <position position="49"/>
    </location>
    <ligand>
        <name>ATP</name>
        <dbReference type="ChEBI" id="CHEBI:30616"/>
    </ligand>
</feature>
<dbReference type="EC" id="2.7.11.1"/>
<dbReference type="EMBL" id="U20757">
    <property type="protein sequence ID" value="AAA86885.1"/>
    <property type="molecule type" value="mRNA"/>
</dbReference>
<dbReference type="EMBL" id="AE014298">
    <property type="protein sequence ID" value="AAG22408.1"/>
    <property type="molecule type" value="Genomic_DNA"/>
</dbReference>
<dbReference type="PIR" id="JC4297">
    <property type="entry name" value="JC4297"/>
</dbReference>
<dbReference type="RefSeq" id="NP_001188547.1">
    <property type="nucleotide sequence ID" value="NM_001201618.1"/>
</dbReference>
<dbReference type="RefSeq" id="NP_001245536.1">
    <property type="nucleotide sequence ID" value="NM_001258607.2"/>
</dbReference>
<dbReference type="RefSeq" id="NP_524769.1">
    <property type="nucleotide sequence ID" value="NM_080030.5"/>
</dbReference>
<dbReference type="RefSeq" id="NP_788861.1">
    <property type="nucleotide sequence ID" value="NM_176688.3"/>
</dbReference>
<dbReference type="SMR" id="P49071"/>
<dbReference type="BioGRID" id="69137">
    <property type="interactions" value="7"/>
</dbReference>
<dbReference type="DIP" id="DIP-21714N"/>
<dbReference type="FunCoup" id="P49071">
    <property type="interactions" value="1141"/>
</dbReference>
<dbReference type="IntAct" id="P49071">
    <property type="interactions" value="6"/>
</dbReference>
<dbReference type="STRING" id="7227.FBpp0292066"/>
<dbReference type="PaxDb" id="7227-FBpp0070802"/>
<dbReference type="DNASU" id="44573"/>
<dbReference type="EnsemblMetazoa" id="FBtr0070837">
    <property type="protein sequence ID" value="FBpp0070802"/>
    <property type="gene ID" value="FBgn0013987"/>
</dbReference>
<dbReference type="EnsemblMetazoa" id="FBtr0070839">
    <property type="protein sequence ID" value="FBpp0070804"/>
    <property type="gene ID" value="FBgn0013987"/>
</dbReference>
<dbReference type="EnsemblMetazoa" id="FBtr0302940">
    <property type="protein sequence ID" value="FBpp0292066"/>
    <property type="gene ID" value="FBgn0013987"/>
</dbReference>
<dbReference type="EnsemblMetazoa" id="FBtr0308577">
    <property type="protein sequence ID" value="FBpp0300801"/>
    <property type="gene ID" value="FBgn0013987"/>
</dbReference>
<dbReference type="GeneID" id="44573"/>
<dbReference type="KEGG" id="dme:Dmel_CG3086"/>
<dbReference type="AGR" id="FB:FBgn0013987"/>
<dbReference type="CTD" id="44573"/>
<dbReference type="FlyBase" id="FBgn0013987">
    <property type="gene designation" value="MAPk-Ak2"/>
</dbReference>
<dbReference type="VEuPathDB" id="VectorBase:FBgn0013987"/>
<dbReference type="eggNOG" id="KOG0604">
    <property type="taxonomic scope" value="Eukaryota"/>
</dbReference>
<dbReference type="GeneTree" id="ENSGT00940000154089"/>
<dbReference type="HOGENOM" id="CLU_000288_63_0_1"/>
<dbReference type="InParanoid" id="P49071"/>
<dbReference type="OMA" id="PSPEWDC"/>
<dbReference type="OrthoDB" id="40902at2759"/>
<dbReference type="PhylomeDB" id="P49071"/>
<dbReference type="BRENDA" id="2.7.11.1">
    <property type="organism ID" value="1994"/>
</dbReference>
<dbReference type="Reactome" id="R-DME-171007">
    <property type="pathway name" value="p38MAPK events"/>
</dbReference>
<dbReference type="Reactome" id="R-DME-199920">
    <property type="pathway name" value="CREB phosphorylation"/>
</dbReference>
<dbReference type="Reactome" id="R-DME-2559580">
    <property type="pathway name" value="Oxidative Stress Induced Senescence"/>
</dbReference>
<dbReference type="Reactome" id="R-DME-3371453">
    <property type="pathway name" value="Regulation of HSF1-mediated heat shock response"/>
</dbReference>
<dbReference type="Reactome" id="R-DME-4420097">
    <property type="pathway name" value="VEGFA-VEGFR2 Pathway"/>
</dbReference>
<dbReference type="Reactome" id="R-DME-450302">
    <property type="pathway name" value="activated TAK1 mediates p38 MAPK activation"/>
</dbReference>
<dbReference type="Reactome" id="R-DME-450385">
    <property type="pathway name" value="Butyrate Response Factor 1 (BRF1) binds and destabilizes mRNA"/>
</dbReference>
<dbReference type="Reactome" id="R-DME-450513">
    <property type="pathway name" value="Tristetraprolin (TTP, ZFP36) binds and destabilizes mRNA"/>
</dbReference>
<dbReference type="SignaLink" id="P49071"/>
<dbReference type="BioGRID-ORCS" id="44573">
    <property type="hits" value="0 hits in 3 CRISPR screens"/>
</dbReference>
<dbReference type="GenomeRNAi" id="44573"/>
<dbReference type="PRO" id="PR:P49071"/>
<dbReference type="Proteomes" id="UP000000803">
    <property type="component" value="Chromosome X"/>
</dbReference>
<dbReference type="Bgee" id="FBgn0013987">
    <property type="expression patterns" value="Expressed in thoracico-abdominal ganglion (Drosophila) and 214 other cell types or tissues"/>
</dbReference>
<dbReference type="ExpressionAtlas" id="P49071">
    <property type="expression patterns" value="baseline and differential"/>
</dbReference>
<dbReference type="GO" id="GO:0005737">
    <property type="term" value="C:cytoplasm"/>
    <property type="evidence" value="ECO:0000250"/>
    <property type="project" value="FlyBase"/>
</dbReference>
<dbReference type="GO" id="GO:0005634">
    <property type="term" value="C:nucleus"/>
    <property type="evidence" value="ECO:0000250"/>
    <property type="project" value="FlyBase"/>
</dbReference>
<dbReference type="GO" id="GO:0005524">
    <property type="term" value="F:ATP binding"/>
    <property type="evidence" value="ECO:0007669"/>
    <property type="project" value="UniProtKB-KW"/>
</dbReference>
<dbReference type="GO" id="GO:0009931">
    <property type="term" value="F:calcium-dependent protein serine/threonine kinase activity"/>
    <property type="evidence" value="ECO:0000318"/>
    <property type="project" value="GO_Central"/>
</dbReference>
<dbReference type="GO" id="GO:0004683">
    <property type="term" value="F:calcium/calmodulin-dependent protein kinase activity"/>
    <property type="evidence" value="ECO:0000318"/>
    <property type="project" value="GO_Central"/>
</dbReference>
<dbReference type="GO" id="GO:0005516">
    <property type="term" value="F:calmodulin binding"/>
    <property type="evidence" value="ECO:0000318"/>
    <property type="project" value="GO_Central"/>
</dbReference>
<dbReference type="GO" id="GO:0051019">
    <property type="term" value="F:mitogen-activated protein kinase binding"/>
    <property type="evidence" value="ECO:0000318"/>
    <property type="project" value="GO_Central"/>
</dbReference>
<dbReference type="GO" id="GO:0004672">
    <property type="term" value="F:protein kinase activity"/>
    <property type="evidence" value="ECO:0000314"/>
    <property type="project" value="FlyBase"/>
</dbReference>
<dbReference type="GO" id="GO:0106310">
    <property type="term" value="F:protein serine kinase activity"/>
    <property type="evidence" value="ECO:0007669"/>
    <property type="project" value="RHEA"/>
</dbReference>
<dbReference type="GO" id="GO:0035556">
    <property type="term" value="P:intracellular signal transduction"/>
    <property type="evidence" value="ECO:0000318"/>
    <property type="project" value="GO_Central"/>
</dbReference>
<dbReference type="GO" id="GO:1902957">
    <property type="term" value="P:negative regulation of mitochondrial electron transport, NADH to ubiquinone"/>
    <property type="evidence" value="ECO:0000316"/>
    <property type="project" value="FlyBase"/>
</dbReference>
<dbReference type="GO" id="GO:0045793">
    <property type="term" value="P:positive regulation of cell size"/>
    <property type="evidence" value="ECO:0000316"/>
    <property type="project" value="FlyBase"/>
</dbReference>
<dbReference type="GO" id="GO:0046328">
    <property type="term" value="P:regulation of JNK cascade"/>
    <property type="evidence" value="ECO:0000316"/>
    <property type="project" value="FlyBase"/>
</dbReference>
<dbReference type="GO" id="GO:0009651">
    <property type="term" value="P:response to salt stress"/>
    <property type="evidence" value="ECO:0000315"/>
    <property type="project" value="FlyBase"/>
</dbReference>
<dbReference type="CDD" id="cd14089">
    <property type="entry name" value="STKc_MAPKAPK"/>
    <property type="match status" value="1"/>
</dbReference>
<dbReference type="FunFam" id="1.10.510.10:FF:000094">
    <property type="entry name" value="MAP kinase-activated protein kinase 2"/>
    <property type="match status" value="1"/>
</dbReference>
<dbReference type="FunFam" id="3.30.200.20:FF:000156">
    <property type="entry name" value="MAP kinase-activated protein kinase 3"/>
    <property type="match status" value="1"/>
</dbReference>
<dbReference type="FunFam" id="4.10.1170.10:FF:000001">
    <property type="entry name" value="MAP kinase-activated protein kinase 3"/>
    <property type="match status" value="1"/>
</dbReference>
<dbReference type="Gene3D" id="4.10.1170.10">
    <property type="entry name" value="MAP kinase activated protein kinase 2"/>
    <property type="match status" value="1"/>
</dbReference>
<dbReference type="Gene3D" id="3.30.200.20">
    <property type="entry name" value="Phosphorylase Kinase, domain 1"/>
    <property type="match status" value="1"/>
</dbReference>
<dbReference type="Gene3D" id="1.10.510.10">
    <property type="entry name" value="Transferase(Phosphotransferase) domain 1"/>
    <property type="match status" value="1"/>
</dbReference>
<dbReference type="InterPro" id="IPR050205">
    <property type="entry name" value="CDPK_Ser/Thr_kinases"/>
</dbReference>
<dbReference type="InterPro" id="IPR011009">
    <property type="entry name" value="Kinase-like_dom_sf"/>
</dbReference>
<dbReference type="InterPro" id="IPR027442">
    <property type="entry name" value="MAPKAPK_C"/>
</dbReference>
<dbReference type="InterPro" id="IPR000719">
    <property type="entry name" value="Prot_kinase_dom"/>
</dbReference>
<dbReference type="InterPro" id="IPR017441">
    <property type="entry name" value="Protein_kinase_ATP_BS"/>
</dbReference>
<dbReference type="InterPro" id="IPR008271">
    <property type="entry name" value="Ser/Thr_kinase_AS"/>
</dbReference>
<dbReference type="PANTHER" id="PTHR24349">
    <property type="entry name" value="SERINE/THREONINE-PROTEIN KINASE"/>
    <property type="match status" value="1"/>
</dbReference>
<dbReference type="Pfam" id="PF00069">
    <property type="entry name" value="Pkinase"/>
    <property type="match status" value="1"/>
</dbReference>
<dbReference type="SMART" id="SM00220">
    <property type="entry name" value="S_TKc"/>
    <property type="match status" value="1"/>
</dbReference>
<dbReference type="SUPFAM" id="SSF56112">
    <property type="entry name" value="Protein kinase-like (PK-like)"/>
    <property type="match status" value="1"/>
</dbReference>
<dbReference type="PROSITE" id="PS00107">
    <property type="entry name" value="PROTEIN_KINASE_ATP"/>
    <property type="match status" value="1"/>
</dbReference>
<dbReference type="PROSITE" id="PS50011">
    <property type="entry name" value="PROTEIN_KINASE_DOM"/>
    <property type="match status" value="1"/>
</dbReference>
<dbReference type="PROSITE" id="PS00108">
    <property type="entry name" value="PROTEIN_KINASE_ST"/>
    <property type="match status" value="1"/>
</dbReference>
<evidence type="ECO:0000250" key="1"/>
<evidence type="ECO:0000255" key="2">
    <source>
        <dbReference type="PROSITE-ProRule" id="PRU00159"/>
    </source>
</evidence>
<evidence type="ECO:0000255" key="3">
    <source>
        <dbReference type="PROSITE-ProRule" id="PRU10027"/>
    </source>
</evidence>
<evidence type="ECO:0000305" key="4"/>
<gene>
    <name type="primary">MAPk-Ak2</name>
    <name type="ORF">CG3086</name>
</gene>
<keyword id="KW-0067">ATP-binding</keyword>
<keyword id="KW-0418">Kinase</keyword>
<keyword id="KW-0547">Nucleotide-binding</keyword>
<keyword id="KW-0597">Phosphoprotein</keyword>
<keyword id="KW-1185">Reference proteome</keyword>
<keyword id="KW-0723">Serine/threonine-protein kinase</keyword>
<keyword id="KW-0808">Transferase</keyword>
<organism>
    <name type="scientific">Drosophila melanogaster</name>
    <name type="common">Fruit fly</name>
    <dbReference type="NCBI Taxonomy" id="7227"/>
    <lineage>
        <taxon>Eukaryota</taxon>
        <taxon>Metazoa</taxon>
        <taxon>Ecdysozoa</taxon>
        <taxon>Arthropoda</taxon>
        <taxon>Hexapoda</taxon>
        <taxon>Insecta</taxon>
        <taxon>Pterygota</taxon>
        <taxon>Neoptera</taxon>
        <taxon>Endopterygota</taxon>
        <taxon>Diptera</taxon>
        <taxon>Brachycera</taxon>
        <taxon>Muscomorpha</taxon>
        <taxon>Ephydroidea</taxon>
        <taxon>Drosophilidae</taxon>
        <taxon>Drosophila</taxon>
        <taxon>Sophophora</taxon>
    </lineage>
</organism>
<comment type="function">
    <text evidence="1">Its physiological substrate seems to be the small heat shock protein (HSP27/HSP25).</text>
</comment>
<comment type="catalytic activity">
    <reaction>
        <text>L-seryl-[protein] + ATP = O-phospho-L-seryl-[protein] + ADP + H(+)</text>
        <dbReference type="Rhea" id="RHEA:17989"/>
        <dbReference type="Rhea" id="RHEA-COMP:9863"/>
        <dbReference type="Rhea" id="RHEA-COMP:11604"/>
        <dbReference type="ChEBI" id="CHEBI:15378"/>
        <dbReference type="ChEBI" id="CHEBI:29999"/>
        <dbReference type="ChEBI" id="CHEBI:30616"/>
        <dbReference type="ChEBI" id="CHEBI:83421"/>
        <dbReference type="ChEBI" id="CHEBI:456216"/>
        <dbReference type="EC" id="2.7.11.1"/>
    </reaction>
</comment>
<comment type="catalytic activity">
    <reaction>
        <text>L-threonyl-[protein] + ATP = O-phospho-L-threonyl-[protein] + ADP + H(+)</text>
        <dbReference type="Rhea" id="RHEA:46608"/>
        <dbReference type="Rhea" id="RHEA-COMP:11060"/>
        <dbReference type="Rhea" id="RHEA-COMP:11605"/>
        <dbReference type="ChEBI" id="CHEBI:15378"/>
        <dbReference type="ChEBI" id="CHEBI:30013"/>
        <dbReference type="ChEBI" id="CHEBI:30616"/>
        <dbReference type="ChEBI" id="CHEBI:61977"/>
        <dbReference type="ChEBI" id="CHEBI:456216"/>
        <dbReference type="EC" id="2.7.11.1"/>
    </reaction>
</comment>
<comment type="PTM">
    <text evidence="1">Phosphorylated and activated by MAP kinase.</text>
</comment>
<comment type="similarity">
    <text evidence="4">Belongs to the protein kinase superfamily. CAMK Ser/Thr protein kinase family.</text>
</comment>